<gene>
    <name type="primary">SYF1</name>
    <name type="ordered locus">CAGL0F02915g</name>
</gene>
<accession>Q6FUJ7</accession>
<keyword id="KW-0507">mRNA processing</keyword>
<keyword id="KW-0508">mRNA splicing</keyword>
<keyword id="KW-0539">Nucleus</keyword>
<keyword id="KW-1185">Reference proteome</keyword>
<keyword id="KW-0677">Repeat</keyword>
<keyword id="KW-0747">Spliceosome</keyword>
<feature type="chain" id="PRO_0000205727" description="Pre-mRNA-splicing factor SYF1">
    <location>
        <begin position="1"/>
        <end position="835"/>
    </location>
</feature>
<feature type="repeat" description="HAT 1">
    <location>
        <begin position="7"/>
        <end position="38"/>
    </location>
</feature>
<feature type="repeat" description="HAT 2">
    <location>
        <begin position="46"/>
        <end position="77"/>
    </location>
</feature>
<feature type="repeat" description="HAT 3">
    <location>
        <begin position="313"/>
        <end position="348"/>
    </location>
</feature>
<feature type="repeat" description="HAT 4">
    <location>
        <begin position="414"/>
        <end position="456"/>
    </location>
</feature>
<feature type="repeat" description="HAT 5">
    <location>
        <begin position="458"/>
        <end position="494"/>
    </location>
</feature>
<feature type="repeat" description="HAT 6">
    <location>
        <begin position="517"/>
        <end position="551"/>
    </location>
</feature>
<feature type="repeat" description="HAT 7">
    <location>
        <begin position="589"/>
        <end position="623"/>
    </location>
</feature>
<feature type="repeat" description="HAT 8">
    <location>
        <begin position="628"/>
        <end position="664"/>
    </location>
</feature>
<feature type="repeat" description="HAT 9">
    <location>
        <begin position="707"/>
        <end position="741"/>
    </location>
</feature>
<feature type="repeat" description="HAT 10">
    <location>
        <begin position="743"/>
        <end position="777"/>
    </location>
</feature>
<evidence type="ECO:0000250" key="1"/>
<evidence type="ECO:0000305" key="2"/>
<sequence>MADIDQYILDDSDIAFEYELQKSPSVEVWQRYIAHWEAQVCEDGVRSARHILWLYERMVTQFPTLTVWEQYIGWFRRQYKLDQYLDTFKLYERCINSVKGPLGVFAVEVMLFCISTFDLDIIMKGLQLVLHRCNKDEVERIWNIVLGFALEHVLPSEEGPNNIDFSAFNDRNYEDLRLDIYKLLFLGGDQTEIEDDEEDEDVDKWTASLLRYYLQVANEDKYDETLRLLIRTKDIKIIKECFDLYIFNDKTGKNNRESKKEYDFDLYIYYLDTLDKLRLDKDYKSVFDNLLEKYPQHRVLLTLKLADFHMKRADFDKMEKVLTKALSETVKTNEFIAIYTYHVNFEQAYVETIFDEMRDDPEIQVQKKWKSEMDDHLIILGDLTSRYHLLVNDLKIRQNPNSVSNWLERTTLFEDFDKKCEVFVEAIKTIDPIKVKDKEYGMLGKLWCDYAKVYWSNKSYEEARTIYESATKVPFPDLQDLEIVWHTWAVNEFQIHNIERALKILRKALTVPPSYESIIDRFKSENRRLPSQTILFTSKRLWNYYIDLLESIPTIDANDVIRAYDTLMTLKLITPVGILNYATFLKQNNNLHGSLQVYEKGINMFPPEICYELWTLLLDEVMEPAHQATKERIRELFEQCLQQLGNTDININSIYVKYSDFEIHNKLFSRAIDLLMSGARRPYTNKEQLKQRVDLWESAISKCEEFLGPDSLRQLLSECIQELPNSKAITYVLKFTKLEMSLSDYTRARELLQYGAQLLPPIKNEELWGLWEQFELEHGDKSYYKEMLLLKQKLEKEMKVDTEEVSKGQGNVQFVASSVKNQEAKTNPDEIEIDI</sequence>
<name>SYF1_CANGA</name>
<protein>
    <recommendedName>
        <fullName>Pre-mRNA-splicing factor SYF1</fullName>
    </recommendedName>
</protein>
<organism>
    <name type="scientific">Candida glabrata (strain ATCC 2001 / BCRC 20586 / JCM 3761 / NBRC 0622 / NRRL Y-65 / CBS 138)</name>
    <name type="common">Yeast</name>
    <name type="synonym">Nakaseomyces glabratus</name>
    <dbReference type="NCBI Taxonomy" id="284593"/>
    <lineage>
        <taxon>Eukaryota</taxon>
        <taxon>Fungi</taxon>
        <taxon>Dikarya</taxon>
        <taxon>Ascomycota</taxon>
        <taxon>Saccharomycotina</taxon>
        <taxon>Saccharomycetes</taxon>
        <taxon>Saccharomycetales</taxon>
        <taxon>Saccharomycetaceae</taxon>
        <taxon>Nakaseomyces</taxon>
    </lineage>
</organism>
<reference key="1">
    <citation type="journal article" date="2004" name="Nature">
        <title>Genome evolution in yeasts.</title>
        <authorList>
            <person name="Dujon B."/>
            <person name="Sherman D."/>
            <person name="Fischer G."/>
            <person name="Durrens P."/>
            <person name="Casaregola S."/>
            <person name="Lafontaine I."/>
            <person name="de Montigny J."/>
            <person name="Marck C."/>
            <person name="Neuveglise C."/>
            <person name="Talla E."/>
            <person name="Goffard N."/>
            <person name="Frangeul L."/>
            <person name="Aigle M."/>
            <person name="Anthouard V."/>
            <person name="Babour A."/>
            <person name="Barbe V."/>
            <person name="Barnay S."/>
            <person name="Blanchin S."/>
            <person name="Beckerich J.-M."/>
            <person name="Beyne E."/>
            <person name="Bleykasten C."/>
            <person name="Boisrame A."/>
            <person name="Boyer J."/>
            <person name="Cattolico L."/>
            <person name="Confanioleri F."/>
            <person name="de Daruvar A."/>
            <person name="Despons L."/>
            <person name="Fabre E."/>
            <person name="Fairhead C."/>
            <person name="Ferry-Dumazet H."/>
            <person name="Groppi A."/>
            <person name="Hantraye F."/>
            <person name="Hennequin C."/>
            <person name="Jauniaux N."/>
            <person name="Joyet P."/>
            <person name="Kachouri R."/>
            <person name="Kerrest A."/>
            <person name="Koszul R."/>
            <person name="Lemaire M."/>
            <person name="Lesur I."/>
            <person name="Ma L."/>
            <person name="Muller H."/>
            <person name="Nicaud J.-M."/>
            <person name="Nikolski M."/>
            <person name="Oztas S."/>
            <person name="Ozier-Kalogeropoulos O."/>
            <person name="Pellenz S."/>
            <person name="Potier S."/>
            <person name="Richard G.-F."/>
            <person name="Straub M.-L."/>
            <person name="Suleau A."/>
            <person name="Swennen D."/>
            <person name="Tekaia F."/>
            <person name="Wesolowski-Louvel M."/>
            <person name="Westhof E."/>
            <person name="Wirth B."/>
            <person name="Zeniou-Meyer M."/>
            <person name="Zivanovic Y."/>
            <person name="Bolotin-Fukuhara M."/>
            <person name="Thierry A."/>
            <person name="Bouchier C."/>
            <person name="Caudron B."/>
            <person name="Scarpelli C."/>
            <person name="Gaillardin C."/>
            <person name="Weissenbach J."/>
            <person name="Wincker P."/>
            <person name="Souciet J.-L."/>
        </authorList>
    </citation>
    <scope>NUCLEOTIDE SEQUENCE [LARGE SCALE GENOMIC DNA]</scope>
    <source>
        <strain>ATCC 2001 / BCRC 20586 / JCM 3761 / NBRC 0622 / NRRL Y-65 / CBS 138</strain>
    </source>
</reference>
<proteinExistence type="inferred from homology"/>
<comment type="function">
    <text evidence="1">Involved in pre-mRNA splicing and cell cycle progression.</text>
</comment>
<comment type="subunit">
    <text evidence="1">Associated with the spliceosome.</text>
</comment>
<comment type="subcellular location">
    <subcellularLocation>
        <location evidence="1">Nucleus</location>
    </subcellularLocation>
</comment>
<comment type="similarity">
    <text evidence="2">Belongs to the crooked-neck family.</text>
</comment>
<dbReference type="EMBL" id="CR380952">
    <property type="protein sequence ID" value="CAG59021.1"/>
    <property type="molecule type" value="Genomic_DNA"/>
</dbReference>
<dbReference type="RefSeq" id="XP_446097.1">
    <property type="nucleotide sequence ID" value="XM_446097.1"/>
</dbReference>
<dbReference type="SMR" id="Q6FUJ7"/>
<dbReference type="FunCoup" id="Q6FUJ7">
    <property type="interactions" value="1143"/>
</dbReference>
<dbReference type="STRING" id="284593.Q6FUJ7"/>
<dbReference type="EnsemblFungi" id="CAGL0F02915g-T">
    <property type="protein sequence ID" value="CAGL0F02915g-T-p1"/>
    <property type="gene ID" value="CAGL0F02915g"/>
</dbReference>
<dbReference type="KEGG" id="cgr:2887745"/>
<dbReference type="CGD" id="CAL0129874">
    <property type="gene designation" value="CAGL0F02915g"/>
</dbReference>
<dbReference type="VEuPathDB" id="FungiDB:CAGL0F02915g"/>
<dbReference type="eggNOG" id="KOG2047">
    <property type="taxonomic scope" value="Eukaryota"/>
</dbReference>
<dbReference type="HOGENOM" id="CLU_007736_0_0_1"/>
<dbReference type="InParanoid" id="Q6FUJ7"/>
<dbReference type="OMA" id="IWYNYLR"/>
<dbReference type="Proteomes" id="UP000002428">
    <property type="component" value="Chromosome F"/>
</dbReference>
<dbReference type="GO" id="GO:0005829">
    <property type="term" value="C:cytosol"/>
    <property type="evidence" value="ECO:0007669"/>
    <property type="project" value="EnsemblFungi"/>
</dbReference>
<dbReference type="GO" id="GO:0000974">
    <property type="term" value="C:Prp19 complex"/>
    <property type="evidence" value="ECO:0007669"/>
    <property type="project" value="EnsemblFungi"/>
</dbReference>
<dbReference type="GO" id="GO:0071006">
    <property type="term" value="C:U2-type catalytic step 1 spliceosome"/>
    <property type="evidence" value="ECO:0007669"/>
    <property type="project" value="EnsemblFungi"/>
</dbReference>
<dbReference type="GO" id="GO:0071007">
    <property type="term" value="C:U2-type catalytic step 2 spliceosome"/>
    <property type="evidence" value="ECO:0007669"/>
    <property type="project" value="EnsemblFungi"/>
</dbReference>
<dbReference type="GO" id="GO:0071008">
    <property type="term" value="C:U2-type post-mRNA release spliceosomal complex"/>
    <property type="evidence" value="ECO:0007669"/>
    <property type="project" value="EnsemblFungi"/>
</dbReference>
<dbReference type="GO" id="GO:0071004">
    <property type="term" value="C:U2-type prespliceosome"/>
    <property type="evidence" value="ECO:0007669"/>
    <property type="project" value="EnsemblFungi"/>
</dbReference>
<dbReference type="GO" id="GO:0000349">
    <property type="term" value="P:generation of catalytic spliceosome for first transesterification step"/>
    <property type="evidence" value="ECO:0007669"/>
    <property type="project" value="EnsemblFungi"/>
</dbReference>
<dbReference type="FunFam" id="1.25.40.10:FF:000137">
    <property type="entry name" value="Pre-mRNA-splicing factor syf1"/>
    <property type="match status" value="1"/>
</dbReference>
<dbReference type="Gene3D" id="1.25.40.10">
    <property type="entry name" value="Tetratricopeptide repeat domain"/>
    <property type="match status" value="3"/>
</dbReference>
<dbReference type="InterPro" id="IPR003107">
    <property type="entry name" value="HAT"/>
</dbReference>
<dbReference type="InterPro" id="IPR056350">
    <property type="entry name" value="HAT_Syf1_central"/>
</dbReference>
<dbReference type="InterPro" id="IPR055430">
    <property type="entry name" value="HAT_Syf1_CNRKL1_C"/>
</dbReference>
<dbReference type="InterPro" id="IPR045075">
    <property type="entry name" value="Syf1-like"/>
</dbReference>
<dbReference type="InterPro" id="IPR011990">
    <property type="entry name" value="TPR-like_helical_dom_sf"/>
</dbReference>
<dbReference type="PANTHER" id="PTHR11246">
    <property type="entry name" value="PRE-MRNA SPLICING FACTOR"/>
    <property type="match status" value="1"/>
</dbReference>
<dbReference type="PANTHER" id="PTHR11246:SF5">
    <property type="entry name" value="PRE-MRNA-SPLICING FACTOR SYF1"/>
    <property type="match status" value="1"/>
</dbReference>
<dbReference type="Pfam" id="PF23231">
    <property type="entry name" value="HAT_Syf1_CNRKL1_C"/>
    <property type="match status" value="1"/>
</dbReference>
<dbReference type="Pfam" id="PF23220">
    <property type="entry name" value="HAT_Syf1_M"/>
    <property type="match status" value="1"/>
</dbReference>
<dbReference type="SMART" id="SM00386">
    <property type="entry name" value="HAT"/>
    <property type="match status" value="8"/>
</dbReference>
<dbReference type="SUPFAM" id="SSF48452">
    <property type="entry name" value="TPR-like"/>
    <property type="match status" value="3"/>
</dbReference>